<evidence type="ECO:0000250" key="1"/>
<evidence type="ECO:0000250" key="2">
    <source>
        <dbReference type="UniProtKB" id="P00157"/>
    </source>
</evidence>
<evidence type="ECO:0000255" key="3">
    <source>
        <dbReference type="PROSITE-ProRule" id="PRU00967"/>
    </source>
</evidence>
<evidence type="ECO:0000255" key="4">
    <source>
        <dbReference type="PROSITE-ProRule" id="PRU00968"/>
    </source>
</evidence>
<name>CYB_ALEGR</name>
<organism>
    <name type="scientific">Alectoris graeca</name>
    <name type="common">Rock partridge</name>
    <name type="synonym">Perdix graeca</name>
    <dbReference type="NCBI Taxonomy" id="40178"/>
    <lineage>
        <taxon>Eukaryota</taxon>
        <taxon>Metazoa</taxon>
        <taxon>Chordata</taxon>
        <taxon>Craniata</taxon>
        <taxon>Vertebrata</taxon>
        <taxon>Euteleostomi</taxon>
        <taxon>Archelosauria</taxon>
        <taxon>Archosauria</taxon>
        <taxon>Dinosauria</taxon>
        <taxon>Saurischia</taxon>
        <taxon>Theropoda</taxon>
        <taxon>Coelurosauria</taxon>
        <taxon>Aves</taxon>
        <taxon>Neognathae</taxon>
        <taxon>Galloanserae</taxon>
        <taxon>Galliformes</taxon>
        <taxon>Phasianidae</taxon>
        <taxon>Perdicinae</taxon>
        <taxon>Alectoris</taxon>
    </lineage>
</organism>
<feature type="chain" id="PRO_0000060564" description="Cytochrome b">
    <location>
        <begin position="1"/>
        <end position="380"/>
    </location>
</feature>
<feature type="transmembrane region" description="Helical" evidence="2">
    <location>
        <begin position="34"/>
        <end position="54"/>
    </location>
</feature>
<feature type="transmembrane region" description="Helical" evidence="2">
    <location>
        <begin position="78"/>
        <end position="99"/>
    </location>
</feature>
<feature type="transmembrane region" description="Helical" evidence="2">
    <location>
        <begin position="114"/>
        <end position="134"/>
    </location>
</feature>
<feature type="transmembrane region" description="Helical" evidence="2">
    <location>
        <begin position="179"/>
        <end position="199"/>
    </location>
</feature>
<feature type="transmembrane region" description="Helical" evidence="2">
    <location>
        <begin position="227"/>
        <end position="247"/>
    </location>
</feature>
<feature type="transmembrane region" description="Helical" evidence="2">
    <location>
        <begin position="289"/>
        <end position="309"/>
    </location>
</feature>
<feature type="transmembrane region" description="Helical" evidence="2">
    <location>
        <begin position="321"/>
        <end position="341"/>
    </location>
</feature>
<feature type="transmembrane region" description="Helical" evidence="2">
    <location>
        <begin position="348"/>
        <end position="368"/>
    </location>
</feature>
<feature type="binding site" description="axial binding residue" evidence="2">
    <location>
        <position position="84"/>
    </location>
    <ligand>
        <name>heme b</name>
        <dbReference type="ChEBI" id="CHEBI:60344"/>
        <label>b562</label>
    </ligand>
    <ligandPart>
        <name>Fe</name>
        <dbReference type="ChEBI" id="CHEBI:18248"/>
    </ligandPart>
</feature>
<feature type="binding site" description="axial binding residue" evidence="2">
    <location>
        <position position="98"/>
    </location>
    <ligand>
        <name>heme b</name>
        <dbReference type="ChEBI" id="CHEBI:60344"/>
        <label>b566</label>
    </ligand>
    <ligandPart>
        <name>Fe</name>
        <dbReference type="ChEBI" id="CHEBI:18248"/>
    </ligandPart>
</feature>
<feature type="binding site" description="axial binding residue" evidence="2">
    <location>
        <position position="183"/>
    </location>
    <ligand>
        <name>heme b</name>
        <dbReference type="ChEBI" id="CHEBI:60344"/>
        <label>b562</label>
    </ligand>
    <ligandPart>
        <name>Fe</name>
        <dbReference type="ChEBI" id="CHEBI:18248"/>
    </ligandPart>
</feature>
<feature type="binding site" description="axial binding residue" evidence="2">
    <location>
        <position position="197"/>
    </location>
    <ligand>
        <name>heme b</name>
        <dbReference type="ChEBI" id="CHEBI:60344"/>
        <label>b566</label>
    </ligand>
    <ligandPart>
        <name>Fe</name>
        <dbReference type="ChEBI" id="CHEBI:18248"/>
    </ligandPart>
</feature>
<feature type="binding site" evidence="2">
    <location>
        <position position="202"/>
    </location>
    <ligand>
        <name>a ubiquinone</name>
        <dbReference type="ChEBI" id="CHEBI:16389"/>
    </ligand>
</feature>
<accession>Q36311</accession>
<geneLocation type="mitochondrion"/>
<gene>
    <name type="primary">MT-CYB</name>
    <name type="synonym">COB</name>
    <name type="synonym">CYTB</name>
    <name type="synonym">MTCYB</name>
</gene>
<proteinExistence type="inferred from homology"/>
<protein>
    <recommendedName>
        <fullName>Cytochrome b</fullName>
    </recommendedName>
    <alternativeName>
        <fullName>Complex III subunit 3</fullName>
    </alternativeName>
    <alternativeName>
        <fullName>Complex III subunit III</fullName>
    </alternativeName>
    <alternativeName>
        <fullName>Cytochrome b-c1 complex subunit 3</fullName>
    </alternativeName>
    <alternativeName>
        <fullName>Ubiquinol-cytochrome-c reductase complex cytochrome b subunit</fullName>
    </alternativeName>
</protein>
<sequence>MAPNIRKSHPLLKMINNSLIDLPTPSNISAWWNFGSLLAVCLITQILTGLLLAMHYTADTTLAFSSVAHTCRNVQYGWLIRNLHANGASFFFICIFLHIGRGLYYGSYLYKETWNTGVILLLTLMATAFVGYVLPWGQMSFWGATVITNLFSAIPYIGQTLVEWAWGGFSVDNPTLTRFFALHFLLPFVIAGITIIHLTFLHESGSNNPLGISSNSDKIPFHPYYSIKDILGLALMFIPFLTLTLFSPNFLGDPENFSPANPLVTPPHIKPEWYFLFAYAILRSIPNKLGGVLALAASVLILLLIPFLHKSKQRTMTFRPLSQTLFWLLVANLLILTWIGSQPVEHPFIIIGQMASLSYFSILLILFPMIGTLENKILNY</sequence>
<dbReference type="EMBL" id="Z48772">
    <property type="protein sequence ID" value="CAA88690.1"/>
    <property type="molecule type" value="Genomic_DNA"/>
</dbReference>
<dbReference type="SMR" id="Q36311"/>
<dbReference type="GO" id="GO:0005743">
    <property type="term" value="C:mitochondrial inner membrane"/>
    <property type="evidence" value="ECO:0007669"/>
    <property type="project" value="UniProtKB-SubCell"/>
</dbReference>
<dbReference type="GO" id="GO:0045275">
    <property type="term" value="C:respiratory chain complex III"/>
    <property type="evidence" value="ECO:0007669"/>
    <property type="project" value="InterPro"/>
</dbReference>
<dbReference type="GO" id="GO:0046872">
    <property type="term" value="F:metal ion binding"/>
    <property type="evidence" value="ECO:0007669"/>
    <property type="project" value="UniProtKB-KW"/>
</dbReference>
<dbReference type="GO" id="GO:0008121">
    <property type="term" value="F:ubiquinol-cytochrome-c reductase activity"/>
    <property type="evidence" value="ECO:0007669"/>
    <property type="project" value="InterPro"/>
</dbReference>
<dbReference type="GO" id="GO:0006122">
    <property type="term" value="P:mitochondrial electron transport, ubiquinol to cytochrome c"/>
    <property type="evidence" value="ECO:0007669"/>
    <property type="project" value="TreeGrafter"/>
</dbReference>
<dbReference type="CDD" id="cd00290">
    <property type="entry name" value="cytochrome_b_C"/>
    <property type="match status" value="1"/>
</dbReference>
<dbReference type="CDD" id="cd00284">
    <property type="entry name" value="Cytochrome_b_N"/>
    <property type="match status" value="1"/>
</dbReference>
<dbReference type="FunFam" id="1.20.810.10:FF:000002">
    <property type="entry name" value="Cytochrome b"/>
    <property type="match status" value="1"/>
</dbReference>
<dbReference type="Gene3D" id="1.20.810.10">
    <property type="entry name" value="Cytochrome Bc1 Complex, Chain C"/>
    <property type="match status" value="1"/>
</dbReference>
<dbReference type="InterPro" id="IPR005798">
    <property type="entry name" value="Cyt_b/b6_C"/>
</dbReference>
<dbReference type="InterPro" id="IPR036150">
    <property type="entry name" value="Cyt_b/b6_C_sf"/>
</dbReference>
<dbReference type="InterPro" id="IPR005797">
    <property type="entry name" value="Cyt_b/b6_N"/>
</dbReference>
<dbReference type="InterPro" id="IPR027387">
    <property type="entry name" value="Cytb/b6-like_sf"/>
</dbReference>
<dbReference type="InterPro" id="IPR030689">
    <property type="entry name" value="Cytochrome_b"/>
</dbReference>
<dbReference type="InterPro" id="IPR048260">
    <property type="entry name" value="Cytochrome_b_C_euk/bac"/>
</dbReference>
<dbReference type="InterPro" id="IPR048259">
    <property type="entry name" value="Cytochrome_b_N_euk/bac"/>
</dbReference>
<dbReference type="InterPro" id="IPR016174">
    <property type="entry name" value="Di-haem_cyt_TM"/>
</dbReference>
<dbReference type="PANTHER" id="PTHR19271">
    <property type="entry name" value="CYTOCHROME B"/>
    <property type="match status" value="1"/>
</dbReference>
<dbReference type="PANTHER" id="PTHR19271:SF16">
    <property type="entry name" value="CYTOCHROME B"/>
    <property type="match status" value="1"/>
</dbReference>
<dbReference type="Pfam" id="PF00032">
    <property type="entry name" value="Cytochrom_B_C"/>
    <property type="match status" value="1"/>
</dbReference>
<dbReference type="Pfam" id="PF00033">
    <property type="entry name" value="Cytochrome_B"/>
    <property type="match status" value="1"/>
</dbReference>
<dbReference type="PIRSF" id="PIRSF038885">
    <property type="entry name" value="COB"/>
    <property type="match status" value="1"/>
</dbReference>
<dbReference type="SUPFAM" id="SSF81648">
    <property type="entry name" value="a domain/subunit of cytochrome bc1 complex (Ubiquinol-cytochrome c reductase)"/>
    <property type="match status" value="1"/>
</dbReference>
<dbReference type="SUPFAM" id="SSF81342">
    <property type="entry name" value="Transmembrane di-heme cytochromes"/>
    <property type="match status" value="1"/>
</dbReference>
<dbReference type="PROSITE" id="PS51003">
    <property type="entry name" value="CYTB_CTER"/>
    <property type="match status" value="1"/>
</dbReference>
<dbReference type="PROSITE" id="PS51002">
    <property type="entry name" value="CYTB_NTER"/>
    <property type="match status" value="1"/>
</dbReference>
<reference key="1">
    <citation type="journal article" date="1996" name="Mol. Phylogenet. Evol.">
        <title>A mitochondrial cytochrome b phylogeny of the Alectoris partridges.</title>
        <authorList>
            <person name="Randi E."/>
        </authorList>
    </citation>
    <scope>NUCLEOTIDE SEQUENCE [GENOMIC DNA]</scope>
    <source>
        <tissue>Liver</tissue>
    </source>
</reference>
<keyword id="KW-0249">Electron transport</keyword>
<keyword id="KW-0349">Heme</keyword>
<keyword id="KW-0408">Iron</keyword>
<keyword id="KW-0472">Membrane</keyword>
<keyword id="KW-0479">Metal-binding</keyword>
<keyword id="KW-0496">Mitochondrion</keyword>
<keyword id="KW-0999">Mitochondrion inner membrane</keyword>
<keyword id="KW-0679">Respiratory chain</keyword>
<keyword id="KW-0812">Transmembrane</keyword>
<keyword id="KW-1133">Transmembrane helix</keyword>
<keyword id="KW-0813">Transport</keyword>
<keyword id="KW-0830">Ubiquinone</keyword>
<comment type="function">
    <text evidence="2">Component of the ubiquinol-cytochrome c reductase complex (complex III or cytochrome b-c1 complex) that is part of the mitochondrial respiratory chain. The b-c1 complex mediates electron transfer from ubiquinol to cytochrome c. Contributes to the generation of a proton gradient across the mitochondrial membrane that is then used for ATP synthesis.</text>
</comment>
<comment type="cofactor">
    <cofactor evidence="2">
        <name>heme b</name>
        <dbReference type="ChEBI" id="CHEBI:60344"/>
    </cofactor>
    <text evidence="2">Binds 2 heme b groups non-covalently.</text>
</comment>
<comment type="subunit">
    <text evidence="2">The cytochrome bc1 complex contains 11 subunits: 3 respiratory subunits (MT-CYB, CYC1 and UQCRFS1), 2 core proteins (UQCRC1 and UQCRC2) and 6 low-molecular weight proteins (UQCRH/QCR6, UQCRB/QCR7, UQCRQ/QCR8, UQCR10/QCR9, UQCR11/QCR10 and a cleavage product of UQCRFS1). This cytochrome bc1 complex then forms a dimer.</text>
</comment>
<comment type="subcellular location">
    <subcellularLocation>
        <location evidence="2">Mitochondrion inner membrane</location>
        <topology evidence="2">Multi-pass membrane protein</topology>
    </subcellularLocation>
</comment>
<comment type="miscellaneous">
    <text evidence="1">Heme 1 (or BL or b562) is low-potential and absorbs at about 562 nm, and heme 2 (or BH or b566) is high-potential and absorbs at about 566 nm.</text>
</comment>
<comment type="similarity">
    <text evidence="3 4">Belongs to the cytochrome b family.</text>
</comment>
<comment type="caution">
    <text evidence="2">The full-length protein contains only eight transmembrane helices, not nine as predicted by bioinformatics tools.</text>
</comment>